<evidence type="ECO:0000255" key="1">
    <source>
        <dbReference type="HAMAP-Rule" id="MF_01390"/>
    </source>
</evidence>
<reference key="1">
    <citation type="journal article" date="2003" name="Am. J. Bot.">
        <title>Angiosperm phlyogeny based on matK sequence information.</title>
        <authorList>
            <person name="Hilu K.W."/>
            <person name="Borsch T."/>
            <person name="Mueller K.F."/>
            <person name="Soltis D.E."/>
            <person name="Soltis P.S."/>
            <person name="Savolainen V."/>
            <person name="Chase M.W."/>
            <person name="Powell M."/>
            <person name="Alice L.A."/>
            <person name="Evans R.C."/>
            <person name="Sanquet H."/>
            <person name="Neinhuis C."/>
            <person name="Slotta T.A.B."/>
            <person name="Rohwer J.G."/>
            <person name="Campbell C.S."/>
            <person name="Chatrou L.W."/>
        </authorList>
    </citation>
    <scope>NUCLEOTIDE SEQUENCE [GENOMIC DNA]</scope>
</reference>
<gene>
    <name evidence="1" type="primary">matK</name>
</gene>
<name>MATK_ELAUM</name>
<dbReference type="EMBL" id="AY257529">
    <property type="protein sequence ID" value="AAP31036.1"/>
    <property type="molecule type" value="Genomic_DNA"/>
</dbReference>
<dbReference type="GO" id="GO:0009507">
    <property type="term" value="C:chloroplast"/>
    <property type="evidence" value="ECO:0007669"/>
    <property type="project" value="UniProtKB-SubCell"/>
</dbReference>
<dbReference type="GO" id="GO:0003723">
    <property type="term" value="F:RNA binding"/>
    <property type="evidence" value="ECO:0007669"/>
    <property type="project" value="UniProtKB-KW"/>
</dbReference>
<dbReference type="GO" id="GO:0006397">
    <property type="term" value="P:mRNA processing"/>
    <property type="evidence" value="ECO:0007669"/>
    <property type="project" value="UniProtKB-KW"/>
</dbReference>
<dbReference type="GO" id="GO:0008380">
    <property type="term" value="P:RNA splicing"/>
    <property type="evidence" value="ECO:0007669"/>
    <property type="project" value="UniProtKB-UniRule"/>
</dbReference>
<dbReference type="GO" id="GO:0008033">
    <property type="term" value="P:tRNA processing"/>
    <property type="evidence" value="ECO:0007669"/>
    <property type="project" value="UniProtKB-KW"/>
</dbReference>
<dbReference type="HAMAP" id="MF_01390">
    <property type="entry name" value="MatK"/>
    <property type="match status" value="1"/>
</dbReference>
<dbReference type="InterPro" id="IPR024937">
    <property type="entry name" value="Domain_X"/>
</dbReference>
<dbReference type="InterPro" id="IPR002866">
    <property type="entry name" value="Maturase_MatK"/>
</dbReference>
<dbReference type="InterPro" id="IPR024942">
    <property type="entry name" value="Maturase_MatK_N"/>
</dbReference>
<dbReference type="PANTHER" id="PTHR34811">
    <property type="entry name" value="MATURASE K"/>
    <property type="match status" value="1"/>
</dbReference>
<dbReference type="PANTHER" id="PTHR34811:SF1">
    <property type="entry name" value="MATURASE K"/>
    <property type="match status" value="1"/>
</dbReference>
<dbReference type="Pfam" id="PF01348">
    <property type="entry name" value="Intron_maturas2"/>
    <property type="match status" value="1"/>
</dbReference>
<dbReference type="Pfam" id="PF01824">
    <property type="entry name" value="MatK_N"/>
    <property type="match status" value="1"/>
</dbReference>
<organism>
    <name type="scientific">Elaeagnus umbellata</name>
    <name type="common">Autumn olive</name>
    <name type="synonym">Elaeagnus crispa</name>
    <dbReference type="NCBI Taxonomy" id="43233"/>
    <lineage>
        <taxon>Eukaryota</taxon>
        <taxon>Viridiplantae</taxon>
        <taxon>Streptophyta</taxon>
        <taxon>Embryophyta</taxon>
        <taxon>Tracheophyta</taxon>
        <taxon>Spermatophyta</taxon>
        <taxon>Magnoliopsida</taxon>
        <taxon>eudicotyledons</taxon>
        <taxon>Gunneridae</taxon>
        <taxon>Pentapetalae</taxon>
        <taxon>rosids</taxon>
        <taxon>fabids</taxon>
        <taxon>Rosales</taxon>
        <taxon>Elaeagnaceae</taxon>
        <taxon>Elaeagnus</taxon>
    </lineage>
</organism>
<keyword id="KW-0150">Chloroplast</keyword>
<keyword id="KW-0507">mRNA processing</keyword>
<keyword id="KW-0934">Plastid</keyword>
<keyword id="KW-0694">RNA-binding</keyword>
<keyword id="KW-0819">tRNA processing</keyword>
<sequence>MEEFQGYLELDKSRQHDLLYPLFFREYIYAFAHDHVLNRSSLLENVSYDNKSGFLIVKHLINRMYHQNNLIISANDSNLKNFGEYNKNLYSQIISEGFVVIMEIPFSLRLVSSLKGTEIVKIYKLRSIHSTFPFLEDKFPHLNYVSNVSIPYPIHPEILVQILRYWVKDASSLHLLRLYLHKYFNWNSIITPKNSVFIFSKMNPRFLLFLYNSHVCEYESILLFLRNKPSHLRLTSSGSFFERIFFYAKIKHSVEEVFVNDFSVTPWFFKAPFMHYVRYRGKSILASKDTPLLMNKWKYYLIHLWQSYFYVWSQPARIYINQLSKHSLIFLGYFSSIRLNLSVVRSQMLKNAFLIDNAMKRLDTLVPISPLIGSLAKMNFCNGLGHPVSKSIWADSSDLDIIDRFAHICRNLSHYYSGSSKKKSLYRIKYILRLSCVKTLSRKHKSTVRAFLKRLGLGLLEEFFTEEEEILSLIFPKTYSTFRKLYRGRIWYLDLFCINDLINHE</sequence>
<proteinExistence type="inferred from homology"/>
<geneLocation type="chloroplast"/>
<feature type="chain" id="PRO_0000143369" description="Maturase K">
    <location>
        <begin position="1"/>
        <end position="505"/>
    </location>
</feature>
<protein>
    <recommendedName>
        <fullName evidence="1">Maturase K</fullName>
    </recommendedName>
    <alternativeName>
        <fullName evidence="1">Intron maturase</fullName>
    </alternativeName>
</protein>
<accession>Q85V94</accession>
<comment type="function">
    <text evidence="1">Usually encoded in the trnK tRNA gene intron. Probably assists in splicing its own and other chloroplast group II introns.</text>
</comment>
<comment type="subcellular location">
    <subcellularLocation>
        <location>Plastid</location>
        <location>Chloroplast</location>
    </subcellularLocation>
</comment>
<comment type="similarity">
    <text evidence="1">Belongs to the intron maturase 2 family. MatK subfamily.</text>
</comment>